<protein>
    <recommendedName>
        <fullName>Homoserine/homoserine lactone efflux protein</fullName>
    </recommendedName>
</protein>
<organism>
    <name type="scientific">Salmonella typhi</name>
    <dbReference type="NCBI Taxonomy" id="90370"/>
    <lineage>
        <taxon>Bacteria</taxon>
        <taxon>Pseudomonadati</taxon>
        <taxon>Pseudomonadota</taxon>
        <taxon>Gammaproteobacteria</taxon>
        <taxon>Enterobacterales</taxon>
        <taxon>Enterobacteriaceae</taxon>
        <taxon>Salmonella</taxon>
    </lineage>
</organism>
<keyword id="KW-1003">Cell membrane</keyword>
<keyword id="KW-0472">Membrane</keyword>
<keyword id="KW-0812">Transmembrane</keyword>
<keyword id="KW-1133">Transmembrane helix</keyword>
<keyword id="KW-0813">Transport</keyword>
<proteinExistence type="inferred from homology"/>
<dbReference type="EMBL" id="AL513382">
    <property type="protein sequence ID" value="CAD07932.1"/>
    <property type="molecule type" value="Genomic_DNA"/>
</dbReference>
<dbReference type="EMBL" id="AE014613">
    <property type="protein sequence ID" value="AAO70865.1"/>
    <property type="molecule type" value="Genomic_DNA"/>
</dbReference>
<dbReference type="RefSeq" id="NP_457791.1">
    <property type="nucleotide sequence ID" value="NC_003198.1"/>
</dbReference>
<dbReference type="RefSeq" id="WP_000142520.1">
    <property type="nucleotide sequence ID" value="NZ_WSUR01000033.1"/>
</dbReference>
<dbReference type="STRING" id="220341.gene:17587451"/>
<dbReference type="KEGG" id="stt:t3337"/>
<dbReference type="KEGG" id="sty:STY3599"/>
<dbReference type="PATRIC" id="fig|220341.7.peg.3668"/>
<dbReference type="eggNOG" id="COG1280">
    <property type="taxonomic scope" value="Bacteria"/>
</dbReference>
<dbReference type="HOGENOM" id="CLU_079569_2_1_6"/>
<dbReference type="OMA" id="MQYVVLG"/>
<dbReference type="OrthoDB" id="9804822at2"/>
<dbReference type="Proteomes" id="UP000000541">
    <property type="component" value="Chromosome"/>
</dbReference>
<dbReference type="Proteomes" id="UP000002670">
    <property type="component" value="Chromosome"/>
</dbReference>
<dbReference type="GO" id="GO:0005886">
    <property type="term" value="C:plasma membrane"/>
    <property type="evidence" value="ECO:0007669"/>
    <property type="project" value="UniProtKB-SubCell"/>
</dbReference>
<dbReference type="GO" id="GO:0042970">
    <property type="term" value="F:homoserine transmembrane transporter activity"/>
    <property type="evidence" value="ECO:0007669"/>
    <property type="project" value="TreeGrafter"/>
</dbReference>
<dbReference type="InterPro" id="IPR004778">
    <property type="entry name" value="Homoserine/Threonine_efflux"/>
</dbReference>
<dbReference type="InterPro" id="IPR001123">
    <property type="entry name" value="LeuE-type"/>
</dbReference>
<dbReference type="NCBIfam" id="TIGR00949">
    <property type="entry name" value="2A76"/>
    <property type="match status" value="1"/>
</dbReference>
<dbReference type="NCBIfam" id="NF007812">
    <property type="entry name" value="PRK10520.1"/>
    <property type="match status" value="1"/>
</dbReference>
<dbReference type="PANTHER" id="PTHR30086">
    <property type="entry name" value="ARGININE EXPORTER PROTEIN ARGO"/>
    <property type="match status" value="1"/>
</dbReference>
<dbReference type="PANTHER" id="PTHR30086:SF14">
    <property type="entry name" value="HOMOSERINE_HOMOSERINE LACTONE EFFLUX PROTEIN"/>
    <property type="match status" value="1"/>
</dbReference>
<dbReference type="Pfam" id="PF01810">
    <property type="entry name" value="LysE"/>
    <property type="match status" value="1"/>
</dbReference>
<dbReference type="PIRSF" id="PIRSF006324">
    <property type="entry name" value="LeuE"/>
    <property type="match status" value="1"/>
</dbReference>
<sequence length="206" mass="22308">MTFEWWFAYLLTSTLLSLSPGSGAINTMTTSINHGYRGAAASIAGLQTGLGIHIVLVGVGLGTLFSRSLIAFEILKWAGAAYLIWLGIQQWRAAGAIDLHTLAQTQSRGRLFKRAIFVNLTNPKSIVFLAALFPQFIMPQQPQLAQYLILGVTTIVVDMIVMTGYATLAQRIAAWIKGPKQMKALNKAFGSLFMLVGALLASARHA</sequence>
<gene>
    <name type="primary">rhtB</name>
    <name type="ordered locus">STY3599</name>
    <name type="ordered locus">t3337</name>
</gene>
<comment type="function">
    <text evidence="1">Conducts the efflux of homoserine and homoserine lactone.</text>
</comment>
<comment type="subcellular location">
    <subcellularLocation>
        <location evidence="3">Cell membrane</location>
        <topology evidence="3">Multi-pass membrane protein</topology>
    </subcellularLocation>
</comment>
<comment type="similarity">
    <text evidence="3">Belongs to the Rht family.</text>
</comment>
<accession>Q8Z3B4</accession>
<name>RHTB_SALTI</name>
<evidence type="ECO:0000250" key="1"/>
<evidence type="ECO:0000255" key="2"/>
<evidence type="ECO:0000305" key="3"/>
<reference key="1">
    <citation type="journal article" date="2001" name="Nature">
        <title>Complete genome sequence of a multiple drug resistant Salmonella enterica serovar Typhi CT18.</title>
        <authorList>
            <person name="Parkhill J."/>
            <person name="Dougan G."/>
            <person name="James K.D."/>
            <person name="Thomson N.R."/>
            <person name="Pickard D."/>
            <person name="Wain J."/>
            <person name="Churcher C.M."/>
            <person name="Mungall K.L."/>
            <person name="Bentley S.D."/>
            <person name="Holden M.T.G."/>
            <person name="Sebaihia M."/>
            <person name="Baker S."/>
            <person name="Basham D."/>
            <person name="Brooks K."/>
            <person name="Chillingworth T."/>
            <person name="Connerton P."/>
            <person name="Cronin A."/>
            <person name="Davis P."/>
            <person name="Davies R.M."/>
            <person name="Dowd L."/>
            <person name="White N."/>
            <person name="Farrar J."/>
            <person name="Feltwell T."/>
            <person name="Hamlin N."/>
            <person name="Haque A."/>
            <person name="Hien T.T."/>
            <person name="Holroyd S."/>
            <person name="Jagels K."/>
            <person name="Krogh A."/>
            <person name="Larsen T.S."/>
            <person name="Leather S."/>
            <person name="Moule S."/>
            <person name="O'Gaora P."/>
            <person name="Parry C."/>
            <person name="Quail M.A."/>
            <person name="Rutherford K.M."/>
            <person name="Simmonds M."/>
            <person name="Skelton J."/>
            <person name="Stevens K."/>
            <person name="Whitehead S."/>
            <person name="Barrell B.G."/>
        </authorList>
    </citation>
    <scope>NUCLEOTIDE SEQUENCE [LARGE SCALE GENOMIC DNA]</scope>
    <source>
        <strain>CT18</strain>
    </source>
</reference>
<reference key="2">
    <citation type="journal article" date="2003" name="J. Bacteriol.">
        <title>Comparative genomics of Salmonella enterica serovar Typhi strains Ty2 and CT18.</title>
        <authorList>
            <person name="Deng W."/>
            <person name="Liou S.-R."/>
            <person name="Plunkett G. III"/>
            <person name="Mayhew G.F."/>
            <person name="Rose D.J."/>
            <person name="Burland V."/>
            <person name="Kodoyianni V."/>
            <person name="Schwartz D.C."/>
            <person name="Blattner F.R."/>
        </authorList>
    </citation>
    <scope>NUCLEOTIDE SEQUENCE [LARGE SCALE GENOMIC DNA]</scope>
    <source>
        <strain>ATCC 700931 / Ty2</strain>
    </source>
</reference>
<feature type="chain" id="PRO_0000094733" description="Homoserine/homoserine lactone efflux protein">
    <location>
        <begin position="1"/>
        <end position="206"/>
    </location>
</feature>
<feature type="transmembrane region" description="Helical" evidence="2">
    <location>
        <begin position="5"/>
        <end position="25"/>
    </location>
</feature>
<feature type="transmembrane region" description="Helical" evidence="2">
    <location>
        <begin position="45"/>
        <end position="65"/>
    </location>
</feature>
<feature type="transmembrane region" description="Helical" evidence="2">
    <location>
        <begin position="68"/>
        <end position="88"/>
    </location>
</feature>
<feature type="transmembrane region" description="Helical" evidence="2">
    <location>
        <begin position="117"/>
        <end position="137"/>
    </location>
</feature>
<feature type="transmembrane region" description="Helical" evidence="2">
    <location>
        <begin position="148"/>
        <end position="168"/>
    </location>
</feature>
<feature type="transmembrane region" description="Helical" evidence="2">
    <location>
        <begin position="182"/>
        <end position="202"/>
    </location>
</feature>